<proteinExistence type="inferred from homology"/>
<name>SYL_PROM4</name>
<keyword id="KW-0030">Aminoacyl-tRNA synthetase</keyword>
<keyword id="KW-0067">ATP-binding</keyword>
<keyword id="KW-0963">Cytoplasm</keyword>
<keyword id="KW-0436">Ligase</keyword>
<keyword id="KW-0547">Nucleotide-binding</keyword>
<keyword id="KW-0648">Protein biosynthesis</keyword>
<keyword id="KW-1185">Reference proteome</keyword>
<dbReference type="EC" id="6.1.1.4" evidence="1"/>
<dbReference type="EMBL" id="CP000878">
    <property type="protein sequence ID" value="ABX08806.1"/>
    <property type="molecule type" value="Genomic_DNA"/>
</dbReference>
<dbReference type="SMR" id="A9BAE4"/>
<dbReference type="STRING" id="93059.P9211_08751"/>
<dbReference type="KEGG" id="pmj:P9211_08751"/>
<dbReference type="eggNOG" id="COG0495">
    <property type="taxonomic scope" value="Bacteria"/>
</dbReference>
<dbReference type="HOGENOM" id="CLU_004427_0_0_3"/>
<dbReference type="OrthoDB" id="9810365at2"/>
<dbReference type="Proteomes" id="UP000000788">
    <property type="component" value="Chromosome"/>
</dbReference>
<dbReference type="GO" id="GO:0005829">
    <property type="term" value="C:cytosol"/>
    <property type="evidence" value="ECO:0007669"/>
    <property type="project" value="TreeGrafter"/>
</dbReference>
<dbReference type="GO" id="GO:0002161">
    <property type="term" value="F:aminoacyl-tRNA deacylase activity"/>
    <property type="evidence" value="ECO:0007669"/>
    <property type="project" value="InterPro"/>
</dbReference>
<dbReference type="GO" id="GO:0005524">
    <property type="term" value="F:ATP binding"/>
    <property type="evidence" value="ECO:0007669"/>
    <property type="project" value="UniProtKB-UniRule"/>
</dbReference>
<dbReference type="GO" id="GO:0004823">
    <property type="term" value="F:leucine-tRNA ligase activity"/>
    <property type="evidence" value="ECO:0007669"/>
    <property type="project" value="UniProtKB-UniRule"/>
</dbReference>
<dbReference type="GO" id="GO:0006429">
    <property type="term" value="P:leucyl-tRNA aminoacylation"/>
    <property type="evidence" value="ECO:0007669"/>
    <property type="project" value="UniProtKB-UniRule"/>
</dbReference>
<dbReference type="CDD" id="cd07958">
    <property type="entry name" value="Anticodon_Ia_Leu_BEm"/>
    <property type="match status" value="1"/>
</dbReference>
<dbReference type="CDD" id="cd00812">
    <property type="entry name" value="LeuRS_core"/>
    <property type="match status" value="1"/>
</dbReference>
<dbReference type="FunFam" id="3.40.50.620:FF:000003">
    <property type="entry name" value="Leucine--tRNA ligase"/>
    <property type="match status" value="1"/>
</dbReference>
<dbReference type="FunFam" id="1.10.730.10:FF:000011">
    <property type="entry name" value="Leucine--tRNA ligase chloroplastic/mitochondrial"/>
    <property type="match status" value="1"/>
</dbReference>
<dbReference type="FunFam" id="3.40.50.620:FF:000100">
    <property type="entry name" value="probable leucine--tRNA ligase, mitochondrial"/>
    <property type="match status" value="1"/>
</dbReference>
<dbReference type="Gene3D" id="3.40.50.620">
    <property type="entry name" value="HUPs"/>
    <property type="match status" value="2"/>
</dbReference>
<dbReference type="Gene3D" id="1.10.730.10">
    <property type="entry name" value="Isoleucyl-tRNA Synthetase, Domain 1"/>
    <property type="match status" value="1"/>
</dbReference>
<dbReference type="HAMAP" id="MF_00049_B">
    <property type="entry name" value="Leu_tRNA_synth_B"/>
    <property type="match status" value="1"/>
</dbReference>
<dbReference type="InterPro" id="IPR001412">
    <property type="entry name" value="aa-tRNA-synth_I_CS"/>
</dbReference>
<dbReference type="InterPro" id="IPR002300">
    <property type="entry name" value="aa-tRNA-synth_Ia"/>
</dbReference>
<dbReference type="InterPro" id="IPR002302">
    <property type="entry name" value="Leu-tRNA-ligase"/>
</dbReference>
<dbReference type="InterPro" id="IPR025709">
    <property type="entry name" value="Leu_tRNA-synth_edit"/>
</dbReference>
<dbReference type="InterPro" id="IPR013155">
    <property type="entry name" value="M/V/L/I-tRNA-synth_anticd-bd"/>
</dbReference>
<dbReference type="InterPro" id="IPR015413">
    <property type="entry name" value="Methionyl/Leucyl_tRNA_Synth"/>
</dbReference>
<dbReference type="InterPro" id="IPR014729">
    <property type="entry name" value="Rossmann-like_a/b/a_fold"/>
</dbReference>
<dbReference type="InterPro" id="IPR009080">
    <property type="entry name" value="tRNAsynth_Ia_anticodon-bd"/>
</dbReference>
<dbReference type="InterPro" id="IPR009008">
    <property type="entry name" value="Val/Leu/Ile-tRNA-synth_edit"/>
</dbReference>
<dbReference type="NCBIfam" id="TIGR00396">
    <property type="entry name" value="leuS_bact"/>
    <property type="match status" value="1"/>
</dbReference>
<dbReference type="PANTHER" id="PTHR43740:SF2">
    <property type="entry name" value="LEUCINE--TRNA LIGASE, MITOCHONDRIAL"/>
    <property type="match status" value="1"/>
</dbReference>
<dbReference type="PANTHER" id="PTHR43740">
    <property type="entry name" value="LEUCYL-TRNA SYNTHETASE"/>
    <property type="match status" value="1"/>
</dbReference>
<dbReference type="Pfam" id="PF08264">
    <property type="entry name" value="Anticodon_1"/>
    <property type="match status" value="1"/>
</dbReference>
<dbReference type="Pfam" id="PF00133">
    <property type="entry name" value="tRNA-synt_1"/>
    <property type="match status" value="2"/>
</dbReference>
<dbReference type="Pfam" id="PF13603">
    <property type="entry name" value="tRNA-synt_1_2"/>
    <property type="match status" value="1"/>
</dbReference>
<dbReference type="Pfam" id="PF09334">
    <property type="entry name" value="tRNA-synt_1g"/>
    <property type="match status" value="1"/>
</dbReference>
<dbReference type="PRINTS" id="PR00985">
    <property type="entry name" value="TRNASYNTHLEU"/>
</dbReference>
<dbReference type="SUPFAM" id="SSF47323">
    <property type="entry name" value="Anticodon-binding domain of a subclass of class I aminoacyl-tRNA synthetases"/>
    <property type="match status" value="1"/>
</dbReference>
<dbReference type="SUPFAM" id="SSF52374">
    <property type="entry name" value="Nucleotidylyl transferase"/>
    <property type="match status" value="1"/>
</dbReference>
<dbReference type="SUPFAM" id="SSF50677">
    <property type="entry name" value="ValRS/IleRS/LeuRS editing domain"/>
    <property type="match status" value="1"/>
</dbReference>
<dbReference type="PROSITE" id="PS00178">
    <property type="entry name" value="AA_TRNA_LIGASE_I"/>
    <property type="match status" value="1"/>
</dbReference>
<sequence>MTDTSSSISRKSLRADSYQPQLIEEKWQNEWKISGLYKTREPKEDQKTFYALSMFPYPSGNLHMGHVRNYVITDVIARVHRMKGFSVLHPMGWDAFGLPAENAAIERNIQPDIWTEKNISHMRSQLDRLGLSIDWDREQTTSKSEYYKWTQSIFLKLYEAGLAYQKSATVNWDPVDKTVLANEQVDADGKSWRSGALVEKKQLKQWFLKITDYAEILLKDIDTLTEWPERVKTMQSNWIGKSVGVKINFQLLTKEKENLSVFTTRPDTLFGSTYLVLSPEDKLVDKLVDPKLINDLSNFRDYVSKLSDKERTAEGKPKNGMAIGAYAINPINQEKLPIWIADYVLSGYGTGAVMGVPAHDQRDLDFAQKYSLPIKYVIKPSGIIEKKKEVKAYSEVGVMINSGPFNGQKSDEVKSLITEKGIKENWAEKKTTYKLRDWLISRQRYWGCPIPIVHCAKCGIVPIEKENLPVFLPTNIQLSGKGNSPLKDNEWTKTQCPICKGIARRESDTMDTFICSSWYYLRFIDPNNKKNIIDKNLADRWMPVDQYVGGIEHAILHLLYARFITKVLRDKDMISIDEPFKKLLTQGMVQGITFKNPKTGKYIPPNKINNIKTPLDPSTGESLELIYEKMSKSKHNGIDPSTVIDKYGADTARMFILFKAPPEKDLEWDDADVEGQYRFLQRLWRLINESKTYNKLSLDSNENNNLNNLNQDEISLRRSVHLAIKEISNDLNEGNQFNTAISELMKLSNNMNELLGKCRISVVNESLSILIRILSPFAPHLAEEAWSTLKGKGSVHEQKWPEFDPNALKQDNYQLVIQMNGKVRGSIKIASETNKQEIEKIALNSDIAKKWLIDGSYKKVIVVLGKLVNIVY</sequence>
<comment type="catalytic activity">
    <reaction evidence="1">
        <text>tRNA(Leu) + L-leucine + ATP = L-leucyl-tRNA(Leu) + AMP + diphosphate</text>
        <dbReference type="Rhea" id="RHEA:11688"/>
        <dbReference type="Rhea" id="RHEA-COMP:9613"/>
        <dbReference type="Rhea" id="RHEA-COMP:9622"/>
        <dbReference type="ChEBI" id="CHEBI:30616"/>
        <dbReference type="ChEBI" id="CHEBI:33019"/>
        <dbReference type="ChEBI" id="CHEBI:57427"/>
        <dbReference type="ChEBI" id="CHEBI:78442"/>
        <dbReference type="ChEBI" id="CHEBI:78494"/>
        <dbReference type="ChEBI" id="CHEBI:456215"/>
        <dbReference type="EC" id="6.1.1.4"/>
    </reaction>
</comment>
<comment type="subcellular location">
    <subcellularLocation>
        <location evidence="1">Cytoplasm</location>
    </subcellularLocation>
</comment>
<comment type="similarity">
    <text evidence="1">Belongs to the class-I aminoacyl-tRNA synthetase family.</text>
</comment>
<protein>
    <recommendedName>
        <fullName evidence="1">Leucine--tRNA ligase</fullName>
        <ecNumber evidence="1">6.1.1.4</ecNumber>
    </recommendedName>
    <alternativeName>
        <fullName evidence="1">Leucyl-tRNA synthetase</fullName>
        <shortName evidence="1">LeuRS</shortName>
    </alternativeName>
</protein>
<evidence type="ECO:0000255" key="1">
    <source>
        <dbReference type="HAMAP-Rule" id="MF_00049"/>
    </source>
</evidence>
<feature type="chain" id="PRO_1000091345" description="Leucine--tRNA ligase">
    <location>
        <begin position="1"/>
        <end position="872"/>
    </location>
</feature>
<feature type="short sequence motif" description="'HIGH' region">
    <location>
        <begin position="56"/>
        <end position="66"/>
    </location>
</feature>
<feature type="short sequence motif" description="'KMSKS' region">
    <location>
        <begin position="629"/>
        <end position="633"/>
    </location>
</feature>
<feature type="binding site" evidence="1">
    <location>
        <position position="632"/>
    </location>
    <ligand>
        <name>ATP</name>
        <dbReference type="ChEBI" id="CHEBI:30616"/>
    </ligand>
</feature>
<organism>
    <name type="scientific">Prochlorococcus marinus (strain MIT 9211)</name>
    <dbReference type="NCBI Taxonomy" id="93059"/>
    <lineage>
        <taxon>Bacteria</taxon>
        <taxon>Bacillati</taxon>
        <taxon>Cyanobacteriota</taxon>
        <taxon>Cyanophyceae</taxon>
        <taxon>Synechococcales</taxon>
        <taxon>Prochlorococcaceae</taxon>
        <taxon>Prochlorococcus</taxon>
    </lineage>
</organism>
<accession>A9BAE4</accession>
<gene>
    <name evidence="1" type="primary">leuS</name>
    <name type="ordered locus">P9211_08751</name>
</gene>
<reference key="1">
    <citation type="journal article" date="2007" name="PLoS Genet.">
        <title>Patterns and implications of gene gain and loss in the evolution of Prochlorococcus.</title>
        <authorList>
            <person name="Kettler G.C."/>
            <person name="Martiny A.C."/>
            <person name="Huang K."/>
            <person name="Zucker J."/>
            <person name="Coleman M.L."/>
            <person name="Rodrigue S."/>
            <person name="Chen F."/>
            <person name="Lapidus A."/>
            <person name="Ferriera S."/>
            <person name="Johnson J."/>
            <person name="Steglich C."/>
            <person name="Church G.M."/>
            <person name="Richardson P."/>
            <person name="Chisholm S.W."/>
        </authorList>
    </citation>
    <scope>NUCLEOTIDE SEQUENCE [LARGE SCALE GENOMIC DNA]</scope>
    <source>
        <strain>MIT 9211</strain>
    </source>
</reference>